<name>OPSD_PROCL</name>
<protein>
    <recommendedName>
        <fullName>Rhodopsin</fullName>
    </recommendedName>
</protein>
<organism>
    <name type="scientific">Procambarus clarkii</name>
    <name type="common">Red swamp crayfish</name>
    <dbReference type="NCBI Taxonomy" id="6728"/>
    <lineage>
        <taxon>Eukaryota</taxon>
        <taxon>Metazoa</taxon>
        <taxon>Ecdysozoa</taxon>
        <taxon>Arthropoda</taxon>
        <taxon>Crustacea</taxon>
        <taxon>Multicrustacea</taxon>
        <taxon>Malacostraca</taxon>
        <taxon>Eumalacostraca</taxon>
        <taxon>Eucarida</taxon>
        <taxon>Decapoda</taxon>
        <taxon>Pleocyemata</taxon>
        <taxon>Astacidea</taxon>
        <taxon>Astacoidea</taxon>
        <taxon>Cambaridae</taxon>
        <taxon>Procambarus</taxon>
    </lineage>
</organism>
<reference key="1">
    <citation type="journal article" date="1993" name="FEBS Lett.">
        <title>Primary structure of crayfish visual pigment deduced from cDNA.</title>
        <authorList>
            <person name="Hariyama T."/>
            <person name="Ozaki K."/>
            <person name="Tokunaga F."/>
            <person name="Tsukahara Y."/>
        </authorList>
    </citation>
    <scope>NUCLEOTIDE SEQUENCE [MRNA]</scope>
    <source>
        <tissue>Retina</tissue>
    </source>
</reference>
<reference key="2">
    <citation type="journal article" date="1993" name="FEBS Lett.">
        <title>Interaction of GTP-binding protein Gq with photoactivated rhodopsin in the photoreceptor membranes of crayfish.</title>
        <authorList>
            <person name="Terakita A."/>
            <person name="Hariyama T."/>
            <person name="Tsukahara Y."/>
            <person name="Katsukura Y."/>
            <person name="Tashiro H."/>
        </authorList>
    </citation>
    <scope>FUNCTION</scope>
    <scope>SUBUNIT</scope>
    <scope>SUBCELLULAR LOCATION</scope>
    <scope>TISSUE SPECIFICITY</scope>
    <scope>INTERACTION WITH GNAQ</scope>
</reference>
<reference key="3">
    <citation type="journal article" date="1993" name="Vis. Neurosci.">
        <title>Packaging of rhodopsin and porphyropsin in the compound eye of the crayfish.</title>
        <authorList>
            <person name="Zeiger J."/>
            <person name="Goldsmith T.H."/>
        </authorList>
    </citation>
    <scope>FUNCTION</scope>
</reference>
<reference key="4">
    <citation type="journal article" date="1993" name="Vision Res.">
        <title>Light-induced binding of proteins to rhabdomeric membranes in the retina of crayfish (Procambarus clarkii).</title>
        <authorList>
            <person name="Terakita A."/>
            <person name="Tsukahara Y."/>
            <person name="Hariyama T."/>
            <person name="Seki T."/>
            <person name="Tashiro H."/>
        </authorList>
    </citation>
    <scope>FUNCTION</scope>
    <scope>SUBCELLULAR LOCATION</scope>
    <scope>TISSUE SPECIFICITY</scope>
</reference>
<comment type="function">
    <text evidence="9 10 11">Photoreceptor required for image-forming vision at low light intensity (PubMed:8249320). Can use both retinal and 3-dehydroretinal as visual pigment (PubMed:8485084). Light-induced isomerization of 11-cis to all-trans retinal triggers a conformational change that activates signaling via G-proteins (PubMed:8249320, PubMed:8365491). Signaling via GNAQ probably mediates the activation of phospholipase C (PubMed:8365491).</text>
</comment>
<comment type="subunit">
    <text evidence="7">Homodimer. Interacts with GNAQ.</text>
</comment>
<comment type="subcellular location">
    <subcellularLocation>
        <location evidence="6 7">Cell projection</location>
        <location evidence="6 7">Rhabdomere membrane</location>
        <topology evidence="2">Multi-pass membrane protein</topology>
    </subcellularLocation>
</comment>
<comment type="tissue specificity">
    <text evidence="6">Detected on rhabdomere membranes on photoreceptor cells in the retina (at protein level).</text>
</comment>
<comment type="PTM">
    <text evidence="1">Contains one covalently linked retinal chromophore.</text>
</comment>
<comment type="similarity">
    <text evidence="4">Belongs to the G-protein coupled receptor 1 family. Opsin subfamily.</text>
</comment>
<keyword id="KW-1003">Cell membrane</keyword>
<keyword id="KW-0966">Cell projection</keyword>
<keyword id="KW-0157">Chromophore</keyword>
<keyword id="KW-1015">Disulfide bond</keyword>
<keyword id="KW-0297">G-protein coupled receptor</keyword>
<keyword id="KW-0325">Glycoprotein</keyword>
<keyword id="KW-0472">Membrane</keyword>
<keyword id="KW-0597">Phosphoprotein</keyword>
<keyword id="KW-0600">Photoreceptor protein</keyword>
<keyword id="KW-0675">Receptor</keyword>
<keyword id="KW-0681">Retinal protein</keyword>
<keyword id="KW-0716">Sensory transduction</keyword>
<keyword id="KW-0807">Transducer</keyword>
<keyword id="KW-0812">Transmembrane</keyword>
<keyword id="KW-1133">Transmembrane helix</keyword>
<keyword id="KW-0844">Vision</keyword>
<feature type="chain" id="PRO_0000197743" description="Rhodopsin">
    <location>
        <begin position="1"/>
        <end position="376"/>
    </location>
</feature>
<feature type="topological domain" description="Extracellular" evidence="8">
    <location>
        <begin position="1"/>
        <end position="52"/>
    </location>
</feature>
<feature type="transmembrane region" description="Helical; Name=1" evidence="1">
    <location>
        <begin position="53"/>
        <end position="77"/>
    </location>
</feature>
<feature type="topological domain" description="Cytoplasmic" evidence="8">
    <location>
        <begin position="78"/>
        <end position="89"/>
    </location>
</feature>
<feature type="transmembrane region" description="Helical; Name=2" evidence="1">
    <location>
        <begin position="90"/>
        <end position="112"/>
    </location>
</feature>
<feature type="topological domain" description="Extracellular" evidence="8">
    <location>
        <begin position="113"/>
        <end position="126"/>
    </location>
</feature>
<feature type="transmembrane region" description="Helical; Name=3" evidence="1">
    <location>
        <begin position="127"/>
        <end position="149"/>
    </location>
</feature>
<feature type="topological domain" description="Cytoplasmic" evidence="8">
    <location>
        <begin position="150"/>
        <end position="168"/>
    </location>
</feature>
<feature type="transmembrane region" description="Helical; Name=4" evidence="1">
    <location>
        <begin position="169"/>
        <end position="189"/>
    </location>
</feature>
<feature type="topological domain" description="Extracellular" evidence="8">
    <location>
        <begin position="190"/>
        <end position="216"/>
    </location>
</feature>
<feature type="transmembrane region" description="Helical; Name=5" evidence="1">
    <location>
        <begin position="217"/>
        <end position="237"/>
    </location>
</feature>
<feature type="topological domain" description="Cytoplasmic" evidence="8">
    <location>
        <begin position="238"/>
        <end position="278"/>
    </location>
</feature>
<feature type="transmembrane region" description="Helical; Name=6" evidence="1">
    <location>
        <begin position="279"/>
        <end position="300"/>
    </location>
</feature>
<feature type="topological domain" description="Extracellular" evidence="8">
    <location>
        <begin position="301"/>
        <end position="311"/>
    </location>
</feature>
<feature type="transmembrane region" description="Helical; Name=7" evidence="1">
    <location>
        <begin position="312"/>
        <end position="333"/>
    </location>
</feature>
<feature type="topological domain" description="Cytoplasmic" evidence="8">
    <location>
        <begin position="334"/>
        <end position="376"/>
    </location>
</feature>
<feature type="region of interest" description="Disordered" evidence="5">
    <location>
        <begin position="353"/>
        <end position="376"/>
    </location>
</feature>
<feature type="short sequence motif" description="'Ionic lock' involved in activated form stabilization" evidence="1">
    <location>
        <begin position="150"/>
        <end position="152"/>
    </location>
</feature>
<feature type="modified residue" description="N6-(retinylidene)lysine" evidence="1">
    <location>
        <position position="321"/>
    </location>
</feature>
<feature type="glycosylation site" description="N-linked (GlcNAc...) asparagine" evidence="3">
    <location>
        <position position="23"/>
    </location>
</feature>
<feature type="glycosylation site" description="N-linked (GlcNAc...) asparagine" evidence="3">
    <location>
        <position position="199"/>
    </location>
</feature>
<feature type="disulfide bond" evidence="4">
    <location>
        <begin position="126"/>
        <end position="203"/>
    </location>
</feature>
<proteinExistence type="evidence at protein level"/>
<gene>
    <name type="primary">RHO</name>
</gene>
<evidence type="ECO:0000250" key="1">
    <source>
        <dbReference type="UniProtKB" id="P02699"/>
    </source>
</evidence>
<evidence type="ECO:0000250" key="2">
    <source>
        <dbReference type="UniProtKB" id="P31356"/>
    </source>
</evidence>
<evidence type="ECO:0000255" key="3"/>
<evidence type="ECO:0000255" key="4">
    <source>
        <dbReference type="PROSITE-ProRule" id="PRU00521"/>
    </source>
</evidence>
<evidence type="ECO:0000256" key="5">
    <source>
        <dbReference type="SAM" id="MobiDB-lite"/>
    </source>
</evidence>
<evidence type="ECO:0000269" key="6">
    <source>
    </source>
</evidence>
<evidence type="ECO:0000269" key="7">
    <source>
    </source>
</evidence>
<evidence type="ECO:0000305" key="8"/>
<evidence type="ECO:0000305" key="9">
    <source>
    </source>
</evidence>
<evidence type="ECO:0000305" key="10">
    <source>
    </source>
</evidence>
<evidence type="ECO:0000305" key="11">
    <source>
    </source>
</evidence>
<sequence>MSSWSNQPAMDDYGLPSSNPYGNFTVVDMAPKDILHMIHPHWYQYPPMNPMMYPLLLIFMLFTGILCLAGNFVTIWVFMNTKSLRTPANLLVVNLAMSDFLMMFTMFPPMMVTCYYHTWTLGPTFCQVYAFLGNLCGCASIWTMVFITFDRYNVIVKGVAGEPLSTKKASLWILTIWVLSITWCIAPFFGWNRYVPEGNLTGCGTDYLSEDILSRSYLYDYSTWVYYLPLLPIYCYVSIIKAVAAHEKGMRDQAKKMGIKSLRNEEAQKTSAECRLAKIAMTTVALWFIAWTPYLLINWVGMFARSYLSPVYTIWGYVFAKANAVYNPIVYAISHPKYRAAMEKKLPCLSCKTESDDVSESASTTTSSAEEKAESA</sequence>
<dbReference type="EMBL" id="S53494">
    <property type="protein sequence ID" value="AAB25036.1"/>
    <property type="molecule type" value="mRNA"/>
</dbReference>
<dbReference type="PIR" id="S28853">
    <property type="entry name" value="S28853"/>
</dbReference>
<dbReference type="SMR" id="P35356"/>
<dbReference type="GlyCosmos" id="P35356">
    <property type="glycosylation" value="2 sites, No reported glycans"/>
</dbReference>
<dbReference type="OrthoDB" id="6332316at2759"/>
<dbReference type="GO" id="GO:0042995">
    <property type="term" value="C:cell projection"/>
    <property type="evidence" value="ECO:0007669"/>
    <property type="project" value="UniProtKB-KW"/>
</dbReference>
<dbReference type="GO" id="GO:0005886">
    <property type="term" value="C:plasma membrane"/>
    <property type="evidence" value="ECO:0000250"/>
    <property type="project" value="UniProtKB"/>
</dbReference>
<dbReference type="GO" id="GO:0004930">
    <property type="term" value="F:G protein-coupled receptor activity"/>
    <property type="evidence" value="ECO:0007669"/>
    <property type="project" value="UniProtKB-KW"/>
</dbReference>
<dbReference type="GO" id="GO:0009881">
    <property type="term" value="F:photoreceptor activity"/>
    <property type="evidence" value="ECO:0007669"/>
    <property type="project" value="UniProtKB-KW"/>
</dbReference>
<dbReference type="GO" id="GO:0007602">
    <property type="term" value="P:phototransduction"/>
    <property type="evidence" value="ECO:0007669"/>
    <property type="project" value="UniProtKB-KW"/>
</dbReference>
<dbReference type="GO" id="GO:0007601">
    <property type="term" value="P:visual perception"/>
    <property type="evidence" value="ECO:0007669"/>
    <property type="project" value="UniProtKB-KW"/>
</dbReference>
<dbReference type="CDD" id="cd15079">
    <property type="entry name" value="7tmA_photoreceptors_insect"/>
    <property type="match status" value="1"/>
</dbReference>
<dbReference type="FunFam" id="1.20.1070.10:FF:000044">
    <property type="entry name" value="Opsin, ultraviolet-sensitive"/>
    <property type="match status" value="1"/>
</dbReference>
<dbReference type="Gene3D" id="1.20.1070.10">
    <property type="entry name" value="Rhodopsin 7-helix transmembrane proteins"/>
    <property type="match status" value="1"/>
</dbReference>
<dbReference type="InterPro" id="IPR050125">
    <property type="entry name" value="GPCR_opsins"/>
</dbReference>
<dbReference type="InterPro" id="IPR000276">
    <property type="entry name" value="GPCR_Rhodpsn"/>
</dbReference>
<dbReference type="InterPro" id="IPR017452">
    <property type="entry name" value="GPCR_Rhodpsn_7TM"/>
</dbReference>
<dbReference type="InterPro" id="IPR001760">
    <property type="entry name" value="Opsin"/>
</dbReference>
<dbReference type="InterPro" id="IPR001391">
    <property type="entry name" value="Opsin_lateye"/>
</dbReference>
<dbReference type="InterPro" id="IPR027430">
    <property type="entry name" value="Retinal_BS"/>
</dbReference>
<dbReference type="PANTHER" id="PTHR24240">
    <property type="entry name" value="OPSIN"/>
    <property type="match status" value="1"/>
</dbReference>
<dbReference type="Pfam" id="PF00001">
    <property type="entry name" value="7tm_1"/>
    <property type="match status" value="1"/>
</dbReference>
<dbReference type="PRINTS" id="PR00237">
    <property type="entry name" value="GPCRRHODOPSN"/>
</dbReference>
<dbReference type="PRINTS" id="PR00238">
    <property type="entry name" value="OPSIN"/>
</dbReference>
<dbReference type="PRINTS" id="PR00578">
    <property type="entry name" value="OPSINLTRLEYE"/>
</dbReference>
<dbReference type="SUPFAM" id="SSF81321">
    <property type="entry name" value="Family A G protein-coupled receptor-like"/>
    <property type="match status" value="1"/>
</dbReference>
<dbReference type="PROSITE" id="PS00237">
    <property type="entry name" value="G_PROTEIN_RECEP_F1_1"/>
    <property type="match status" value="1"/>
</dbReference>
<dbReference type="PROSITE" id="PS50262">
    <property type="entry name" value="G_PROTEIN_RECEP_F1_2"/>
    <property type="match status" value="1"/>
</dbReference>
<dbReference type="PROSITE" id="PS00238">
    <property type="entry name" value="OPSIN"/>
    <property type="match status" value="1"/>
</dbReference>
<accession>P35356</accession>